<protein>
    <recommendedName>
        <fullName>Cytochrome c oxidase subunit 4 isoform 2, mitochondrial</fullName>
    </recommendedName>
    <alternativeName>
        <fullName>Cytochrome c oxidase subunit IV isoform 2</fullName>
        <shortName>COX IV-2</shortName>
    </alternativeName>
</protein>
<proteinExistence type="evidence at protein level"/>
<feature type="transit peptide" description="Mitochondrion" evidence="3">
    <location>
        <begin position="1"/>
        <end position="34"/>
    </location>
</feature>
<feature type="chain" id="PRO_0000006090" description="Cytochrome c oxidase subunit 4 isoform 2, mitochondrial">
    <location>
        <begin position="35"/>
        <end position="172"/>
    </location>
</feature>
<feature type="topological domain" description="Mitochondrial matrix" evidence="1">
    <location>
        <begin position="35"/>
        <end position="101"/>
    </location>
</feature>
<feature type="transmembrane region" description="Helical" evidence="1">
    <location>
        <begin position="102"/>
        <end position="127"/>
    </location>
</feature>
<feature type="topological domain" description="Mitochondrial intermembrane" evidence="1">
    <location>
        <begin position="128"/>
        <end position="172"/>
    </location>
</feature>
<feature type="region of interest" description="Disordered" evidence="4">
    <location>
        <begin position="13"/>
        <end position="32"/>
    </location>
</feature>
<feature type="compositionally biased region" description="Low complexity" evidence="4">
    <location>
        <begin position="13"/>
        <end position="22"/>
    </location>
</feature>
<sequence>MFSRAARSLVMRTGLRTRGTGTHSPGDAAGSQRRMTPYVDCYAQRSYPMPDEPFCTELSEEQRALKEKEKGSWTQLSQAEKVALYRLQFHETFAEMNHRSNEWKTVMGCVFFFIGFTALVIWWQRVYVFPKKVVTLTEERKAQQLQRLLDMKSNPIQGLAAHWDYEKKEWKK</sequence>
<gene>
    <name type="primary">Cox4i2</name>
    <name type="synonym">Cox4b</name>
</gene>
<organism>
    <name type="scientific">Mus musculus</name>
    <name type="common">Mouse</name>
    <dbReference type="NCBI Taxonomy" id="10090"/>
    <lineage>
        <taxon>Eukaryota</taxon>
        <taxon>Metazoa</taxon>
        <taxon>Chordata</taxon>
        <taxon>Craniata</taxon>
        <taxon>Vertebrata</taxon>
        <taxon>Euteleostomi</taxon>
        <taxon>Mammalia</taxon>
        <taxon>Eutheria</taxon>
        <taxon>Euarchontoglires</taxon>
        <taxon>Glires</taxon>
        <taxon>Rodentia</taxon>
        <taxon>Myomorpha</taxon>
        <taxon>Muroidea</taxon>
        <taxon>Muridae</taxon>
        <taxon>Murinae</taxon>
        <taxon>Mus</taxon>
        <taxon>Mus</taxon>
    </lineage>
</organism>
<dbReference type="EMBL" id="AF271382">
    <property type="protein sequence ID" value="AAK49433.1"/>
    <property type="molecule type" value="mRNA"/>
</dbReference>
<dbReference type="EMBL" id="BC049623">
    <property type="protein sequence ID" value="AAH49623.1"/>
    <property type="molecule type" value="mRNA"/>
</dbReference>
<dbReference type="CCDS" id="CCDS16898.1"/>
<dbReference type="RefSeq" id="NP_444321.1">
    <property type="nucleotide sequence ID" value="NM_053091.2"/>
</dbReference>
<dbReference type="RefSeq" id="XP_017174836.1">
    <property type="nucleotide sequence ID" value="XM_017319347.1"/>
</dbReference>
<dbReference type="SMR" id="Q91W29"/>
<dbReference type="FunCoup" id="Q91W29">
    <property type="interactions" value="364"/>
</dbReference>
<dbReference type="STRING" id="10090.ENSMUSP00000105446"/>
<dbReference type="PhosphoSitePlus" id="Q91W29"/>
<dbReference type="PaxDb" id="10090-ENSMUSP00000105446"/>
<dbReference type="ProteomicsDB" id="284103"/>
<dbReference type="Antibodypedia" id="25206">
    <property type="antibodies" value="186 antibodies from 31 providers"/>
</dbReference>
<dbReference type="DNASU" id="84682"/>
<dbReference type="Ensembl" id="ENSMUST00000010020.12">
    <property type="protein sequence ID" value="ENSMUSP00000010020.6"/>
    <property type="gene ID" value="ENSMUSG00000009876.14"/>
</dbReference>
<dbReference type="Ensembl" id="ENSMUST00000109821.2">
    <property type="protein sequence ID" value="ENSMUSP00000105446.2"/>
    <property type="gene ID" value="ENSMUSG00000009876.14"/>
</dbReference>
<dbReference type="GeneID" id="84682"/>
<dbReference type="KEGG" id="mmu:84682"/>
<dbReference type="UCSC" id="uc008ngg.1">
    <property type="organism name" value="mouse"/>
</dbReference>
<dbReference type="AGR" id="MGI:2135755"/>
<dbReference type="CTD" id="84701"/>
<dbReference type="MGI" id="MGI:2135755">
    <property type="gene designation" value="Cox4i2"/>
</dbReference>
<dbReference type="VEuPathDB" id="HostDB:ENSMUSG00000009876"/>
<dbReference type="eggNOG" id="KOG4075">
    <property type="taxonomic scope" value="Eukaryota"/>
</dbReference>
<dbReference type="GeneTree" id="ENSGT00390000002407"/>
<dbReference type="HOGENOM" id="CLU_117340_1_1_1"/>
<dbReference type="InParanoid" id="Q91W29"/>
<dbReference type="OMA" id="DEPFCTD"/>
<dbReference type="OrthoDB" id="186013at2759"/>
<dbReference type="PhylomeDB" id="Q91W29"/>
<dbReference type="TreeFam" id="TF105061"/>
<dbReference type="BRENDA" id="7.1.1.9">
    <property type="organism ID" value="3474"/>
</dbReference>
<dbReference type="Reactome" id="R-MMU-5628897">
    <property type="pathway name" value="TP53 Regulates Metabolic Genes"/>
</dbReference>
<dbReference type="Reactome" id="R-MMU-611105">
    <property type="pathway name" value="Respiratory electron transport"/>
</dbReference>
<dbReference type="Reactome" id="R-MMU-9707564">
    <property type="pathway name" value="Cytoprotection by HMOX1"/>
</dbReference>
<dbReference type="Reactome" id="R-MMU-9864848">
    <property type="pathway name" value="Complex IV assembly"/>
</dbReference>
<dbReference type="UniPathway" id="UPA00705"/>
<dbReference type="BioGRID-ORCS" id="84682">
    <property type="hits" value="3 hits in 79 CRISPR screens"/>
</dbReference>
<dbReference type="ChiTaRS" id="Cox4i2">
    <property type="organism name" value="mouse"/>
</dbReference>
<dbReference type="PRO" id="PR:Q91W29"/>
<dbReference type="Proteomes" id="UP000000589">
    <property type="component" value="Chromosome 2"/>
</dbReference>
<dbReference type="RNAct" id="Q91W29">
    <property type="molecule type" value="protein"/>
</dbReference>
<dbReference type="Bgee" id="ENSMUSG00000009876">
    <property type="expression patterns" value="Expressed in retinal neural layer and 107 other cell types or tissues"/>
</dbReference>
<dbReference type="GO" id="GO:0005743">
    <property type="term" value="C:mitochondrial inner membrane"/>
    <property type="evidence" value="ECO:0007669"/>
    <property type="project" value="UniProtKB-SubCell"/>
</dbReference>
<dbReference type="GO" id="GO:0031966">
    <property type="term" value="C:mitochondrial membrane"/>
    <property type="evidence" value="ECO:0000314"/>
    <property type="project" value="MGI"/>
</dbReference>
<dbReference type="GO" id="GO:0005739">
    <property type="term" value="C:mitochondrion"/>
    <property type="evidence" value="ECO:0007005"/>
    <property type="project" value="MGI"/>
</dbReference>
<dbReference type="GO" id="GO:0045277">
    <property type="term" value="C:respiratory chain complex IV"/>
    <property type="evidence" value="ECO:0000247"/>
    <property type="project" value="MGI"/>
</dbReference>
<dbReference type="GO" id="GO:0004129">
    <property type="term" value="F:cytochrome-c oxidase activity"/>
    <property type="evidence" value="ECO:0000247"/>
    <property type="project" value="MGI"/>
</dbReference>
<dbReference type="GO" id="GO:0006123">
    <property type="term" value="P:mitochondrial electron transport, cytochrome c to oxygen"/>
    <property type="evidence" value="ECO:0007669"/>
    <property type="project" value="Ensembl"/>
</dbReference>
<dbReference type="CDD" id="cd00922">
    <property type="entry name" value="Cyt_c_Oxidase_IV"/>
    <property type="match status" value="1"/>
</dbReference>
<dbReference type="FunFam" id="1.10.442.10:FF:000001">
    <property type="entry name" value="Cytochrome c oxidase subunit 4 isoform 1"/>
    <property type="match status" value="1"/>
</dbReference>
<dbReference type="Gene3D" id="1.10.442.10">
    <property type="entry name" value="Cytochrome c oxidase subunit IV"/>
    <property type="match status" value="1"/>
</dbReference>
<dbReference type="InterPro" id="IPR013288">
    <property type="entry name" value="Cyt_c_oxidase_su4"/>
</dbReference>
<dbReference type="InterPro" id="IPR004203">
    <property type="entry name" value="Cyt_c_oxidase_su4_fam"/>
</dbReference>
<dbReference type="InterPro" id="IPR036639">
    <property type="entry name" value="Cyt_c_oxidase_su4_sf"/>
</dbReference>
<dbReference type="PANTHER" id="PTHR10707:SF11">
    <property type="entry name" value="CYTOCHROME C OXIDASE SUBUNIT 4 ISOFORM 2, MITOCHONDRIAL"/>
    <property type="match status" value="1"/>
</dbReference>
<dbReference type="PANTHER" id="PTHR10707">
    <property type="entry name" value="CYTOCHROME C OXIDASE SUBUNIT IV"/>
    <property type="match status" value="1"/>
</dbReference>
<dbReference type="Pfam" id="PF02936">
    <property type="entry name" value="COX4"/>
    <property type="match status" value="1"/>
</dbReference>
<dbReference type="PRINTS" id="PR01873">
    <property type="entry name" value="CYTCOXIDASE4"/>
</dbReference>
<dbReference type="SUPFAM" id="SSF81406">
    <property type="entry name" value="Mitochondrial cytochrome c oxidase subunit IV"/>
    <property type="match status" value="1"/>
</dbReference>
<evidence type="ECO:0000250" key="1">
    <source>
        <dbReference type="UniProtKB" id="P00423"/>
    </source>
</evidence>
<evidence type="ECO:0000250" key="2">
    <source>
        <dbReference type="UniProtKB" id="P00424"/>
    </source>
</evidence>
<evidence type="ECO:0000255" key="3"/>
<evidence type="ECO:0000256" key="4">
    <source>
        <dbReference type="SAM" id="MobiDB-lite"/>
    </source>
</evidence>
<evidence type="ECO:0000305" key="5"/>
<name>COX42_MOUSE</name>
<accession>Q91W29</accession>
<reference key="1">
    <citation type="journal article" date="2001" name="Gene">
        <title>Mammalian subunit IV isoforms of cytochrome c oxidase.</title>
        <authorList>
            <person name="Huettemann M."/>
            <person name="Kadenbach B."/>
            <person name="Grossman L.I."/>
        </authorList>
    </citation>
    <scope>NUCLEOTIDE SEQUENCE [MRNA]</scope>
    <source>
        <tissue>Heart</tissue>
    </source>
</reference>
<reference key="2">
    <citation type="journal article" date="2004" name="Genome Res.">
        <title>The status, quality, and expansion of the NIH full-length cDNA project: the Mammalian Gene Collection (MGC).</title>
        <authorList>
            <consortium name="The MGC Project Team"/>
        </authorList>
    </citation>
    <scope>NUCLEOTIDE SEQUENCE [LARGE SCALE MRNA]</scope>
    <source>
        <tissue>Brain</tissue>
    </source>
</reference>
<reference key="3">
    <citation type="journal article" date="2010" name="Cell">
        <title>A tissue-specific atlas of mouse protein phosphorylation and expression.</title>
        <authorList>
            <person name="Huttlin E.L."/>
            <person name="Jedrychowski M.P."/>
            <person name="Elias J.E."/>
            <person name="Goswami T."/>
            <person name="Rad R."/>
            <person name="Beausoleil S.A."/>
            <person name="Villen J."/>
            <person name="Haas W."/>
            <person name="Sowa M.E."/>
            <person name="Gygi S.P."/>
        </authorList>
    </citation>
    <scope>IDENTIFICATION BY MASS SPECTROMETRY [LARGE SCALE ANALYSIS]</scope>
    <source>
        <tissue>Lung</tissue>
    </source>
</reference>
<comment type="function">
    <text evidence="2">Component of the cytochrome c oxidase, the last enzyme in the mitochondrial electron transport chain which drives oxidative phosphorylation. The respiratory chain contains 3 multisubunit complexes succinate dehydrogenase (complex II, CII), ubiquinol-cytochrome c oxidoreductase (cytochrome b-c1 complex, complex III, CIII) and cytochrome c oxidase (complex IV, CIV), that cooperate to transfer electrons derived from NADH and succinate to molecular oxygen, creating an electrochemical gradient over the inner membrane that drives transmembrane transport and the ATP synthase. Cytochrome c oxidase is the component of the respiratory chain that catalyzes the reduction of oxygen to water. Electrons originating from reduced cytochrome c in the intermembrane space (IMS) are transferred via the dinuclear copper A center (CU(A)) of subunit 2 and heme A of subunit 1 to the active site in subunit 1, a binuclear center (BNC) formed by heme A3 and copper B (CU(B)). The BNC reduces molecular oxygen to 2 water molecules using 4 electrons from cytochrome c in the IMS and 4 protons from the mitochondrial matrix.</text>
</comment>
<comment type="pathway">
    <text evidence="2">Energy metabolism; oxidative phosphorylation.</text>
</comment>
<comment type="subunit">
    <text evidence="1">Component of the cytochrome c oxidase (complex IV, CIV), a multisubunit enzyme composed of 14 subunits. The complex is composed of a catalytic core of 3 subunits MT-CO1, MT-CO2 and MT-CO3, encoded in the mitochondrial DNA, and 11 supernumerary subunits COX4I, COX5A, COX5B, COX6A, COX6B, COX6C, COX7A, COX7B, COX7C, COX8 and NDUFA4, which are encoded in the nuclear genome. The complex exists as a monomer or a dimer and forms supercomplexes (SCs) in the inner mitochondrial membrane with NADH-ubiquinone oxidoreductase (complex I, CI) and ubiquinol-cytochrome c oxidoreductase (cytochrome b-c1 complex, complex III, CIII), resulting in different assemblies (supercomplex SCI(1)III(2)IV(1) and megacomplex MCI(2)III(2)IV(2)).</text>
</comment>
<comment type="subcellular location">
    <subcellularLocation>
        <location evidence="1">Mitochondrion inner membrane</location>
        <topology evidence="1">Single-pass membrane protein</topology>
    </subcellularLocation>
</comment>
<comment type="similarity">
    <text evidence="5">Belongs to the cytochrome c oxidase IV family.</text>
</comment>
<keyword id="KW-0472">Membrane</keyword>
<keyword id="KW-0496">Mitochondrion</keyword>
<keyword id="KW-0999">Mitochondrion inner membrane</keyword>
<keyword id="KW-1185">Reference proteome</keyword>
<keyword id="KW-0809">Transit peptide</keyword>
<keyword id="KW-0812">Transmembrane</keyword>
<keyword id="KW-1133">Transmembrane helix</keyword>